<dbReference type="EC" id="2.4.2.7" evidence="1"/>
<dbReference type="EMBL" id="CP000487">
    <property type="protein sequence ID" value="ABK82642.1"/>
    <property type="molecule type" value="Genomic_DNA"/>
</dbReference>
<dbReference type="RefSeq" id="WP_002849820.1">
    <property type="nucleotide sequence ID" value="NC_008599.1"/>
</dbReference>
<dbReference type="SMR" id="A0RQ44"/>
<dbReference type="GeneID" id="61064994"/>
<dbReference type="KEGG" id="cff:CFF8240_1169"/>
<dbReference type="eggNOG" id="COG0503">
    <property type="taxonomic scope" value="Bacteria"/>
</dbReference>
<dbReference type="HOGENOM" id="CLU_063339_3_0_7"/>
<dbReference type="UniPathway" id="UPA00588">
    <property type="reaction ID" value="UER00646"/>
</dbReference>
<dbReference type="Proteomes" id="UP000000760">
    <property type="component" value="Chromosome"/>
</dbReference>
<dbReference type="GO" id="GO:0005737">
    <property type="term" value="C:cytoplasm"/>
    <property type="evidence" value="ECO:0007669"/>
    <property type="project" value="UniProtKB-SubCell"/>
</dbReference>
<dbReference type="GO" id="GO:0002055">
    <property type="term" value="F:adenine binding"/>
    <property type="evidence" value="ECO:0007669"/>
    <property type="project" value="TreeGrafter"/>
</dbReference>
<dbReference type="GO" id="GO:0003999">
    <property type="term" value="F:adenine phosphoribosyltransferase activity"/>
    <property type="evidence" value="ECO:0007669"/>
    <property type="project" value="UniProtKB-UniRule"/>
</dbReference>
<dbReference type="GO" id="GO:0016208">
    <property type="term" value="F:AMP binding"/>
    <property type="evidence" value="ECO:0007669"/>
    <property type="project" value="TreeGrafter"/>
</dbReference>
<dbReference type="GO" id="GO:0006168">
    <property type="term" value="P:adenine salvage"/>
    <property type="evidence" value="ECO:0007669"/>
    <property type="project" value="InterPro"/>
</dbReference>
<dbReference type="GO" id="GO:0044209">
    <property type="term" value="P:AMP salvage"/>
    <property type="evidence" value="ECO:0007669"/>
    <property type="project" value="UniProtKB-UniRule"/>
</dbReference>
<dbReference type="GO" id="GO:0006166">
    <property type="term" value="P:purine ribonucleoside salvage"/>
    <property type="evidence" value="ECO:0007669"/>
    <property type="project" value="UniProtKB-KW"/>
</dbReference>
<dbReference type="CDD" id="cd06223">
    <property type="entry name" value="PRTases_typeI"/>
    <property type="match status" value="1"/>
</dbReference>
<dbReference type="FunFam" id="3.40.50.2020:FF:000021">
    <property type="entry name" value="Adenine phosphoribosyltransferase"/>
    <property type="match status" value="1"/>
</dbReference>
<dbReference type="Gene3D" id="3.40.50.2020">
    <property type="match status" value="1"/>
</dbReference>
<dbReference type="HAMAP" id="MF_00004">
    <property type="entry name" value="Aden_phosphoribosyltr"/>
    <property type="match status" value="1"/>
</dbReference>
<dbReference type="InterPro" id="IPR005764">
    <property type="entry name" value="Ade_phspho_trans"/>
</dbReference>
<dbReference type="InterPro" id="IPR000836">
    <property type="entry name" value="PRibTrfase_dom"/>
</dbReference>
<dbReference type="InterPro" id="IPR029057">
    <property type="entry name" value="PRTase-like"/>
</dbReference>
<dbReference type="InterPro" id="IPR050054">
    <property type="entry name" value="UPRTase/APRTase"/>
</dbReference>
<dbReference type="NCBIfam" id="TIGR01090">
    <property type="entry name" value="apt"/>
    <property type="match status" value="1"/>
</dbReference>
<dbReference type="NCBIfam" id="NF002634">
    <property type="entry name" value="PRK02304.1-3"/>
    <property type="match status" value="1"/>
</dbReference>
<dbReference type="NCBIfam" id="NF002636">
    <property type="entry name" value="PRK02304.1-5"/>
    <property type="match status" value="1"/>
</dbReference>
<dbReference type="PANTHER" id="PTHR32315">
    <property type="entry name" value="ADENINE PHOSPHORIBOSYLTRANSFERASE"/>
    <property type="match status" value="1"/>
</dbReference>
<dbReference type="PANTHER" id="PTHR32315:SF3">
    <property type="entry name" value="ADENINE PHOSPHORIBOSYLTRANSFERASE"/>
    <property type="match status" value="1"/>
</dbReference>
<dbReference type="Pfam" id="PF00156">
    <property type="entry name" value="Pribosyltran"/>
    <property type="match status" value="1"/>
</dbReference>
<dbReference type="SUPFAM" id="SSF53271">
    <property type="entry name" value="PRTase-like"/>
    <property type="match status" value="1"/>
</dbReference>
<dbReference type="PROSITE" id="PS00103">
    <property type="entry name" value="PUR_PYR_PR_TRANSFER"/>
    <property type="match status" value="1"/>
</dbReference>
<sequence length="182" mass="20317">MKELSKFDKEYLLGTIRDIKNFPKPGIIFKDITTLLGNAKAFKFLLDHLEDRYKDENLDFIVGIESRGFILGAALSARLNLGFVPVRKPNKLPYITISQKYSLEYGFDEVEMHIDAFDSIKNPKVLLVDDLIATGGTAKASSQLLKKLGVNLVEACFLVDLVELGGSKELKSECPVYSVLEV</sequence>
<protein>
    <recommendedName>
        <fullName evidence="1">Adenine phosphoribosyltransferase</fullName>
        <shortName evidence="1">APRT</shortName>
        <ecNumber evidence="1">2.4.2.7</ecNumber>
    </recommendedName>
</protein>
<comment type="function">
    <text evidence="1">Catalyzes a salvage reaction resulting in the formation of AMP, that is energically less costly than de novo synthesis.</text>
</comment>
<comment type="catalytic activity">
    <reaction evidence="1">
        <text>AMP + diphosphate = 5-phospho-alpha-D-ribose 1-diphosphate + adenine</text>
        <dbReference type="Rhea" id="RHEA:16609"/>
        <dbReference type="ChEBI" id="CHEBI:16708"/>
        <dbReference type="ChEBI" id="CHEBI:33019"/>
        <dbReference type="ChEBI" id="CHEBI:58017"/>
        <dbReference type="ChEBI" id="CHEBI:456215"/>
        <dbReference type="EC" id="2.4.2.7"/>
    </reaction>
</comment>
<comment type="pathway">
    <text evidence="1">Purine metabolism; AMP biosynthesis via salvage pathway; AMP from adenine: step 1/1.</text>
</comment>
<comment type="subunit">
    <text evidence="1">Homodimer.</text>
</comment>
<comment type="subcellular location">
    <subcellularLocation>
        <location evidence="1">Cytoplasm</location>
    </subcellularLocation>
</comment>
<comment type="similarity">
    <text evidence="1">Belongs to the purine/pyrimidine phosphoribosyltransferase family.</text>
</comment>
<proteinExistence type="inferred from homology"/>
<feature type="chain" id="PRO_1000000268" description="Adenine phosphoribosyltransferase">
    <location>
        <begin position="1"/>
        <end position="182"/>
    </location>
</feature>
<accession>A0RQ44</accession>
<reference key="1">
    <citation type="submission" date="2006-11" db="EMBL/GenBank/DDBJ databases">
        <title>Sequence of Campylobacter fetus subsp. fetus 82-40.</title>
        <authorList>
            <person name="Fouts D.E."/>
            <person name="Nelson K.E."/>
        </authorList>
    </citation>
    <scope>NUCLEOTIDE SEQUENCE [LARGE SCALE GENOMIC DNA]</scope>
    <source>
        <strain>82-40</strain>
    </source>
</reference>
<organism>
    <name type="scientific">Campylobacter fetus subsp. fetus (strain 82-40)</name>
    <dbReference type="NCBI Taxonomy" id="360106"/>
    <lineage>
        <taxon>Bacteria</taxon>
        <taxon>Pseudomonadati</taxon>
        <taxon>Campylobacterota</taxon>
        <taxon>Epsilonproteobacteria</taxon>
        <taxon>Campylobacterales</taxon>
        <taxon>Campylobacteraceae</taxon>
        <taxon>Campylobacter</taxon>
    </lineage>
</organism>
<name>APT_CAMFF</name>
<keyword id="KW-0963">Cytoplasm</keyword>
<keyword id="KW-0328">Glycosyltransferase</keyword>
<keyword id="KW-0660">Purine salvage</keyword>
<keyword id="KW-0808">Transferase</keyword>
<gene>
    <name evidence="1" type="primary">apt</name>
    <name type="ordered locus">CFF8240_1169</name>
</gene>
<evidence type="ECO:0000255" key="1">
    <source>
        <dbReference type="HAMAP-Rule" id="MF_00004"/>
    </source>
</evidence>